<accession>O26340</accession>
<protein>
    <recommendedName>
        <fullName>Uncharacterized protein MTH_238</fullName>
    </recommendedName>
</protein>
<comment type="similarity">
    <text evidence="1">To M.jannaschii MJ0658.</text>
</comment>
<gene>
    <name type="ordered locus">MTH_238</name>
</gene>
<name>Y238_METTH</name>
<proteinExistence type="predicted"/>
<feature type="chain" id="PRO_0000106975" description="Uncharacterized protein MTH_238">
    <location>
        <begin position="1"/>
        <end position="306"/>
    </location>
</feature>
<keyword id="KW-1185">Reference proteome</keyword>
<sequence>MFGFLGRRRDEREVIEIEPDGPVDCIADFTYNFYWQHRGEKLDPDERIPGTSHTFREVVEHLKDGGEVIVRGDAGHRLASSMGADLAYFGGGGGVMDAGVVTVEGDVDTRMGISMVSGTIYVKGAVRDPIGNIIEVRSDRRGYKKFMSVTDILMNGLRAEPVNVTLEPGRMVIDDGHVRDTLGARLDADVEIIHHGNVDLSTGILMRRGTVRVMGDAGKNTGALLSGGTVIIQGDCDDFSGIDMRDGYLIVDGDAGKFLGAQRRGGVILARRGKPVPPTSESDLTEDDRRVLMEAGLRPHLFRRFS</sequence>
<evidence type="ECO:0000305" key="1"/>
<dbReference type="EMBL" id="AE000666">
    <property type="protein sequence ID" value="AAB84744.1"/>
    <property type="molecule type" value="Genomic_DNA"/>
</dbReference>
<dbReference type="PIR" id="F69129">
    <property type="entry name" value="F69129"/>
</dbReference>
<dbReference type="RefSeq" id="WP_010875877.1">
    <property type="nucleotide sequence ID" value="NC_000916.1"/>
</dbReference>
<dbReference type="STRING" id="187420.MTH_238"/>
<dbReference type="PaxDb" id="187420-MTH_238"/>
<dbReference type="EnsemblBacteria" id="AAB84744">
    <property type="protein sequence ID" value="AAB84744"/>
    <property type="gene ID" value="MTH_238"/>
</dbReference>
<dbReference type="KEGG" id="mth:MTH_238"/>
<dbReference type="PATRIC" id="fig|187420.15.peg.207"/>
<dbReference type="HOGENOM" id="CLU_867712_0_0_2"/>
<dbReference type="InParanoid" id="O26340"/>
<dbReference type="Proteomes" id="UP000005223">
    <property type="component" value="Chromosome"/>
</dbReference>
<dbReference type="GO" id="GO:0016491">
    <property type="term" value="F:oxidoreductase activity"/>
    <property type="evidence" value="ECO:0007669"/>
    <property type="project" value="InterPro"/>
</dbReference>
<dbReference type="CDD" id="cd00504">
    <property type="entry name" value="GXGXG"/>
    <property type="match status" value="1"/>
</dbReference>
<dbReference type="Gene3D" id="2.160.20.60">
    <property type="entry name" value="Glutamate synthase, alpha subunit, C-terminal domain"/>
    <property type="match status" value="2"/>
</dbReference>
<dbReference type="InterPro" id="IPR036485">
    <property type="entry name" value="Glu_synth_asu_C_sf"/>
</dbReference>
<dbReference type="PANTHER" id="PTHR39673:SF8">
    <property type="entry name" value="GLUTAMATE SYNTHASE ALPHA SUBUNIT C-TERMINAL DOMAIN-CONTAINING PROTEIN"/>
    <property type="match status" value="1"/>
</dbReference>
<dbReference type="PANTHER" id="PTHR39673">
    <property type="entry name" value="TUNGSTEN FORMYLMETHANOFURAN DEHYDROGENASE, SUBUNIT C (FWDC)"/>
    <property type="match status" value="1"/>
</dbReference>
<dbReference type="SUPFAM" id="SSF69336">
    <property type="entry name" value="Alpha subunit of glutamate synthase, C-terminal domain"/>
    <property type="match status" value="2"/>
</dbReference>
<reference key="1">
    <citation type="journal article" date="1997" name="J. Bacteriol.">
        <title>Complete genome sequence of Methanobacterium thermoautotrophicum deltaH: functional analysis and comparative genomics.</title>
        <authorList>
            <person name="Smith D.R."/>
            <person name="Doucette-Stamm L.A."/>
            <person name="Deloughery C."/>
            <person name="Lee H.-M."/>
            <person name="Dubois J."/>
            <person name="Aldredge T."/>
            <person name="Bashirzadeh R."/>
            <person name="Blakely D."/>
            <person name="Cook R."/>
            <person name="Gilbert K."/>
            <person name="Harrison D."/>
            <person name="Hoang L."/>
            <person name="Keagle P."/>
            <person name="Lumm W."/>
            <person name="Pothier B."/>
            <person name="Qiu D."/>
            <person name="Spadafora R."/>
            <person name="Vicare R."/>
            <person name="Wang Y."/>
            <person name="Wierzbowski J."/>
            <person name="Gibson R."/>
            <person name="Jiwani N."/>
            <person name="Caruso A."/>
            <person name="Bush D."/>
            <person name="Safer H."/>
            <person name="Patwell D."/>
            <person name="Prabhakar S."/>
            <person name="McDougall S."/>
            <person name="Shimer G."/>
            <person name="Goyal A."/>
            <person name="Pietrovski S."/>
            <person name="Church G.M."/>
            <person name="Daniels C.J."/>
            <person name="Mao J.-I."/>
            <person name="Rice P."/>
            <person name="Noelling J."/>
            <person name="Reeve J.N."/>
        </authorList>
    </citation>
    <scope>NUCLEOTIDE SEQUENCE [LARGE SCALE GENOMIC DNA]</scope>
    <source>
        <strain>ATCC 29096 / DSM 1053 / JCM 10044 / NBRC 100330 / Delta H</strain>
    </source>
</reference>
<organism>
    <name type="scientific">Methanothermobacter thermautotrophicus (strain ATCC 29096 / DSM 1053 / JCM 10044 / NBRC 100330 / Delta H)</name>
    <name type="common">Methanobacterium thermoautotrophicum</name>
    <dbReference type="NCBI Taxonomy" id="187420"/>
    <lineage>
        <taxon>Archaea</taxon>
        <taxon>Methanobacteriati</taxon>
        <taxon>Methanobacteriota</taxon>
        <taxon>Methanomada group</taxon>
        <taxon>Methanobacteria</taxon>
        <taxon>Methanobacteriales</taxon>
        <taxon>Methanobacteriaceae</taxon>
        <taxon>Methanothermobacter</taxon>
    </lineage>
</organism>